<gene>
    <name evidence="1" type="primary">rpsL</name>
    <name type="ordered locus">MMOB3690</name>
</gene>
<organism>
    <name type="scientific">Mycoplasma mobile (strain ATCC 43663 / 163K / NCTC 11711)</name>
    <name type="common">Mesomycoplasma mobile</name>
    <dbReference type="NCBI Taxonomy" id="267748"/>
    <lineage>
        <taxon>Bacteria</taxon>
        <taxon>Bacillati</taxon>
        <taxon>Mycoplasmatota</taxon>
        <taxon>Mycoplasmoidales</taxon>
        <taxon>Metamycoplasmataceae</taxon>
        <taxon>Mesomycoplasma</taxon>
    </lineage>
</organism>
<reference key="1">
    <citation type="journal article" date="2004" name="Genome Res.">
        <title>The complete genome and proteome of Mycoplasma mobile.</title>
        <authorList>
            <person name="Jaffe J.D."/>
            <person name="Stange-Thomann N."/>
            <person name="Smith C."/>
            <person name="DeCaprio D."/>
            <person name="Fisher S."/>
            <person name="Butler J."/>
            <person name="Calvo S."/>
            <person name="Elkins T."/>
            <person name="FitzGerald M.G."/>
            <person name="Hafez N."/>
            <person name="Kodira C.D."/>
            <person name="Major J."/>
            <person name="Wang S."/>
            <person name="Wilkinson J."/>
            <person name="Nicol R."/>
            <person name="Nusbaum C."/>
            <person name="Birren B."/>
            <person name="Berg H.C."/>
            <person name="Church G.M."/>
        </authorList>
    </citation>
    <scope>NUCLEOTIDE SEQUENCE [LARGE SCALE GENOMIC DNA]</scope>
    <source>
        <strain>ATCC 43663 / NCTC 11711 / 163 K</strain>
    </source>
</reference>
<sequence length="139" mass="15388">MPTINQLVSQGRKKKVWKTSSPALSLVYNSLNKKQTEIPAPFKRGVCTRVATMTPKKPNSALRKYARVKLSNGFEVTAYIPGEGHNIQEHSVVLIRGGRVKDLPGVRYTIVRGTQDAAGVANRNQSRSRYGTKKPKPKS</sequence>
<proteinExistence type="inferred from homology"/>
<accession>Q6KHS3</accession>
<name>RS12_MYCM1</name>
<keyword id="KW-1185">Reference proteome</keyword>
<keyword id="KW-0687">Ribonucleoprotein</keyword>
<keyword id="KW-0689">Ribosomal protein</keyword>
<keyword id="KW-0694">RNA-binding</keyword>
<keyword id="KW-0699">rRNA-binding</keyword>
<keyword id="KW-0820">tRNA-binding</keyword>
<comment type="function">
    <text evidence="1">With S4 and S5 plays an important role in translational accuracy.</text>
</comment>
<comment type="function">
    <text evidence="1">Interacts with and stabilizes bases of the 16S rRNA that are involved in tRNA selection in the A site and with the mRNA backbone. Located at the interface of the 30S and 50S subunits, it traverses the body of the 30S subunit contacting proteins on the other side and probably holding the rRNA structure together. The combined cluster of proteins S8, S12 and S17 appears to hold together the shoulder and platform of the 30S subunit.</text>
</comment>
<comment type="subunit">
    <text evidence="1">Part of the 30S ribosomal subunit. Contacts proteins S8 and S17. May interact with IF1 in the 30S initiation complex.</text>
</comment>
<comment type="similarity">
    <text evidence="1">Belongs to the universal ribosomal protein uS12 family.</text>
</comment>
<comment type="caution">
    <text evidence="3">Because the enzyme that would modify Asp-102 to 3-methylthioaspartic acid has not been found in the proteome of this organism, that modification is not predicted.</text>
</comment>
<feature type="chain" id="PRO_0000146264" description="Small ribosomal subunit protein uS12">
    <location>
        <begin position="1"/>
        <end position="139"/>
    </location>
</feature>
<feature type="region of interest" description="Disordered" evidence="2">
    <location>
        <begin position="118"/>
        <end position="139"/>
    </location>
</feature>
<feature type="compositionally biased region" description="Basic residues" evidence="2">
    <location>
        <begin position="130"/>
        <end position="139"/>
    </location>
</feature>
<dbReference type="EMBL" id="AE017308">
    <property type="protein sequence ID" value="AAT27855.1"/>
    <property type="molecule type" value="Genomic_DNA"/>
</dbReference>
<dbReference type="RefSeq" id="WP_011264889.1">
    <property type="nucleotide sequence ID" value="NC_006908.1"/>
</dbReference>
<dbReference type="SMR" id="Q6KHS3"/>
<dbReference type="STRING" id="267748.MMOB3690"/>
<dbReference type="KEGG" id="mmo:MMOB3690"/>
<dbReference type="eggNOG" id="COG0048">
    <property type="taxonomic scope" value="Bacteria"/>
</dbReference>
<dbReference type="HOGENOM" id="CLU_104295_1_2_14"/>
<dbReference type="OrthoDB" id="9802366at2"/>
<dbReference type="Proteomes" id="UP000009072">
    <property type="component" value="Chromosome"/>
</dbReference>
<dbReference type="GO" id="GO:0015935">
    <property type="term" value="C:small ribosomal subunit"/>
    <property type="evidence" value="ECO:0007669"/>
    <property type="project" value="InterPro"/>
</dbReference>
<dbReference type="GO" id="GO:0019843">
    <property type="term" value="F:rRNA binding"/>
    <property type="evidence" value="ECO:0007669"/>
    <property type="project" value="UniProtKB-UniRule"/>
</dbReference>
<dbReference type="GO" id="GO:0003735">
    <property type="term" value="F:structural constituent of ribosome"/>
    <property type="evidence" value="ECO:0007669"/>
    <property type="project" value="InterPro"/>
</dbReference>
<dbReference type="GO" id="GO:0000049">
    <property type="term" value="F:tRNA binding"/>
    <property type="evidence" value="ECO:0007669"/>
    <property type="project" value="UniProtKB-UniRule"/>
</dbReference>
<dbReference type="GO" id="GO:0006412">
    <property type="term" value="P:translation"/>
    <property type="evidence" value="ECO:0007669"/>
    <property type="project" value="UniProtKB-UniRule"/>
</dbReference>
<dbReference type="CDD" id="cd03368">
    <property type="entry name" value="Ribosomal_S12"/>
    <property type="match status" value="1"/>
</dbReference>
<dbReference type="FunFam" id="2.40.50.140:FF:000001">
    <property type="entry name" value="30S ribosomal protein S12"/>
    <property type="match status" value="1"/>
</dbReference>
<dbReference type="Gene3D" id="2.40.50.140">
    <property type="entry name" value="Nucleic acid-binding proteins"/>
    <property type="match status" value="1"/>
</dbReference>
<dbReference type="HAMAP" id="MF_00403_B">
    <property type="entry name" value="Ribosomal_uS12_B"/>
    <property type="match status" value="1"/>
</dbReference>
<dbReference type="InterPro" id="IPR012340">
    <property type="entry name" value="NA-bd_OB-fold"/>
</dbReference>
<dbReference type="InterPro" id="IPR006032">
    <property type="entry name" value="Ribosomal_uS12"/>
</dbReference>
<dbReference type="InterPro" id="IPR005679">
    <property type="entry name" value="Ribosomal_uS12_bac"/>
</dbReference>
<dbReference type="NCBIfam" id="TIGR00981">
    <property type="entry name" value="rpsL_bact"/>
    <property type="match status" value="1"/>
</dbReference>
<dbReference type="PANTHER" id="PTHR11652">
    <property type="entry name" value="30S RIBOSOMAL PROTEIN S12 FAMILY MEMBER"/>
    <property type="match status" value="1"/>
</dbReference>
<dbReference type="Pfam" id="PF00164">
    <property type="entry name" value="Ribosom_S12_S23"/>
    <property type="match status" value="1"/>
</dbReference>
<dbReference type="PRINTS" id="PR01034">
    <property type="entry name" value="RIBOSOMALS12"/>
</dbReference>
<dbReference type="SUPFAM" id="SSF50249">
    <property type="entry name" value="Nucleic acid-binding proteins"/>
    <property type="match status" value="1"/>
</dbReference>
<dbReference type="PROSITE" id="PS00055">
    <property type="entry name" value="RIBOSOMAL_S12"/>
    <property type="match status" value="1"/>
</dbReference>
<protein>
    <recommendedName>
        <fullName evidence="1">Small ribosomal subunit protein uS12</fullName>
    </recommendedName>
    <alternativeName>
        <fullName evidence="3">30S ribosomal protein S12</fullName>
    </alternativeName>
</protein>
<evidence type="ECO:0000255" key="1">
    <source>
        <dbReference type="HAMAP-Rule" id="MF_00403"/>
    </source>
</evidence>
<evidence type="ECO:0000256" key="2">
    <source>
        <dbReference type="SAM" id="MobiDB-lite"/>
    </source>
</evidence>
<evidence type="ECO:0000305" key="3"/>